<sequence>MSRYRGPRLKKIRRLGALPGLTRKTPKSGSNLKKKFHSGKKEQYRIRLQEKQKLRFHYGLTERQLLRYVHIAGKAKRSTGQVLLQLLEMRLDNILFRLGMAATIPGARQLVNHRHILVNGRIVNIPSFRCKPRDIITTKDNQRSQSLVQNSIASSDPGKLPKHLTIDTLEYKGLVNKILDRKWVGLKINELLVVEY</sequence>
<proteinExistence type="inferred from homology"/>
<protein>
    <recommendedName>
        <fullName evidence="3">Small ribosomal subunit protein uS4c</fullName>
    </recommendedName>
    <alternativeName>
        <fullName>30S ribosomal protein S4, chloroplastic</fullName>
    </alternativeName>
</protein>
<geneLocation type="chloroplast"/>
<feature type="chain" id="PRO_0000132545" description="Small ribosomal subunit protein uS4c">
    <location>
        <begin position="1"/>
        <end position="196" status="greater than"/>
    </location>
</feature>
<feature type="domain" description="S4 RNA-binding">
    <location>
        <begin position="89"/>
        <end position="169"/>
    </location>
</feature>
<feature type="region of interest" description="Disordered" evidence="2">
    <location>
        <begin position="16"/>
        <end position="36"/>
    </location>
</feature>
<feature type="non-terminal residue">
    <location>
        <position position="196"/>
    </location>
</feature>
<reference key="1">
    <citation type="journal article" date="1994" name="Plant Syst. Evol.">
        <title>The chloroplast gene rps4 as a tool for the study of Poaceae phylogeny.</title>
        <authorList>
            <person name="Nadot S."/>
            <person name="Bajon R."/>
            <person name="Lejeune B."/>
        </authorList>
        <dbReference type="AGRICOLA" id="IND20417698"/>
    </citation>
    <scope>NUCLEOTIDE SEQUENCE [GENOMIC DNA]</scope>
</reference>
<organism>
    <name type="scientific">Brachypodium pinnatum</name>
    <name type="common">Tor grass</name>
    <name type="synonym">Bromus pinnatus</name>
    <dbReference type="NCBI Taxonomy" id="29663"/>
    <lineage>
        <taxon>Eukaryota</taxon>
        <taxon>Viridiplantae</taxon>
        <taxon>Streptophyta</taxon>
        <taxon>Embryophyta</taxon>
        <taxon>Tracheophyta</taxon>
        <taxon>Spermatophyta</taxon>
        <taxon>Magnoliopsida</taxon>
        <taxon>Liliopsida</taxon>
        <taxon>Poales</taxon>
        <taxon>Poaceae</taxon>
        <taxon>BOP clade</taxon>
        <taxon>Pooideae</taxon>
        <taxon>Stipodae</taxon>
        <taxon>Brachypodieae</taxon>
        <taxon>Brachypodium</taxon>
    </lineage>
</organism>
<name>RR4_BRAPI</name>
<evidence type="ECO:0000250" key="1"/>
<evidence type="ECO:0000256" key="2">
    <source>
        <dbReference type="SAM" id="MobiDB-lite"/>
    </source>
</evidence>
<evidence type="ECO:0000305" key="3"/>
<keyword id="KW-0150">Chloroplast</keyword>
<keyword id="KW-0934">Plastid</keyword>
<keyword id="KW-0687">Ribonucleoprotein</keyword>
<keyword id="KW-0689">Ribosomal protein</keyword>
<keyword id="KW-0694">RNA-binding</keyword>
<keyword id="KW-0699">rRNA-binding</keyword>
<dbReference type="EMBL" id="Z29230">
    <property type="protein sequence ID" value="CAA82429.1"/>
    <property type="molecule type" value="Genomic_DNA"/>
</dbReference>
<dbReference type="PIR" id="S41259">
    <property type="entry name" value="S41259"/>
</dbReference>
<dbReference type="SMR" id="P69635"/>
<dbReference type="GO" id="GO:0009507">
    <property type="term" value="C:chloroplast"/>
    <property type="evidence" value="ECO:0007669"/>
    <property type="project" value="UniProtKB-SubCell"/>
</dbReference>
<dbReference type="GO" id="GO:0015935">
    <property type="term" value="C:small ribosomal subunit"/>
    <property type="evidence" value="ECO:0007669"/>
    <property type="project" value="InterPro"/>
</dbReference>
<dbReference type="GO" id="GO:0019843">
    <property type="term" value="F:rRNA binding"/>
    <property type="evidence" value="ECO:0007669"/>
    <property type="project" value="UniProtKB-KW"/>
</dbReference>
<dbReference type="GO" id="GO:0003735">
    <property type="term" value="F:structural constituent of ribosome"/>
    <property type="evidence" value="ECO:0007669"/>
    <property type="project" value="InterPro"/>
</dbReference>
<dbReference type="GO" id="GO:0042274">
    <property type="term" value="P:ribosomal small subunit biogenesis"/>
    <property type="evidence" value="ECO:0007669"/>
    <property type="project" value="TreeGrafter"/>
</dbReference>
<dbReference type="GO" id="GO:0006412">
    <property type="term" value="P:translation"/>
    <property type="evidence" value="ECO:0007669"/>
    <property type="project" value="InterPro"/>
</dbReference>
<dbReference type="CDD" id="cd00165">
    <property type="entry name" value="S4"/>
    <property type="match status" value="1"/>
</dbReference>
<dbReference type="FunFam" id="1.10.1050.10:FF:000002">
    <property type="entry name" value="30S ribosomal protein S4, chloroplastic"/>
    <property type="match status" value="1"/>
</dbReference>
<dbReference type="FunFam" id="3.10.290.10:FF:000081">
    <property type="entry name" value="30S ribosomal protein S4, chloroplastic"/>
    <property type="match status" value="1"/>
</dbReference>
<dbReference type="Gene3D" id="1.10.1050.10">
    <property type="entry name" value="Ribosomal Protein S4 Delta 41, Chain A, domain 1"/>
    <property type="match status" value="1"/>
</dbReference>
<dbReference type="Gene3D" id="3.10.290.10">
    <property type="entry name" value="RNA-binding S4 domain"/>
    <property type="match status" value="1"/>
</dbReference>
<dbReference type="HAMAP" id="MF_01306_B">
    <property type="entry name" value="Ribosomal_uS4_B"/>
    <property type="match status" value="1"/>
</dbReference>
<dbReference type="InterPro" id="IPR022801">
    <property type="entry name" value="Ribosomal_uS4"/>
</dbReference>
<dbReference type="InterPro" id="IPR005709">
    <property type="entry name" value="Ribosomal_uS4_bac-type"/>
</dbReference>
<dbReference type="InterPro" id="IPR018079">
    <property type="entry name" value="Ribosomal_uS4_CS"/>
</dbReference>
<dbReference type="InterPro" id="IPR001912">
    <property type="entry name" value="Ribosomal_uS4_N"/>
</dbReference>
<dbReference type="InterPro" id="IPR002942">
    <property type="entry name" value="S4_RNA-bd"/>
</dbReference>
<dbReference type="InterPro" id="IPR036986">
    <property type="entry name" value="S4_RNA-bd_sf"/>
</dbReference>
<dbReference type="NCBIfam" id="NF003717">
    <property type="entry name" value="PRK05327.1"/>
    <property type="match status" value="1"/>
</dbReference>
<dbReference type="NCBIfam" id="TIGR01017">
    <property type="entry name" value="rpsD_bact"/>
    <property type="match status" value="1"/>
</dbReference>
<dbReference type="PANTHER" id="PTHR11831">
    <property type="entry name" value="30S 40S RIBOSOMAL PROTEIN"/>
    <property type="match status" value="1"/>
</dbReference>
<dbReference type="PANTHER" id="PTHR11831:SF4">
    <property type="entry name" value="SMALL RIBOSOMAL SUBUNIT PROTEIN US4M"/>
    <property type="match status" value="1"/>
</dbReference>
<dbReference type="Pfam" id="PF00163">
    <property type="entry name" value="Ribosomal_S4"/>
    <property type="match status" value="1"/>
</dbReference>
<dbReference type="Pfam" id="PF01479">
    <property type="entry name" value="S4"/>
    <property type="match status" value="1"/>
</dbReference>
<dbReference type="SMART" id="SM01390">
    <property type="entry name" value="Ribosomal_S4"/>
    <property type="match status" value="1"/>
</dbReference>
<dbReference type="SMART" id="SM00363">
    <property type="entry name" value="S4"/>
    <property type="match status" value="1"/>
</dbReference>
<dbReference type="SUPFAM" id="SSF55174">
    <property type="entry name" value="Alpha-L RNA-binding motif"/>
    <property type="match status" value="1"/>
</dbReference>
<dbReference type="PROSITE" id="PS00632">
    <property type="entry name" value="RIBOSOMAL_S4"/>
    <property type="match status" value="1"/>
</dbReference>
<dbReference type="PROSITE" id="PS50889">
    <property type="entry name" value="S4"/>
    <property type="match status" value="1"/>
</dbReference>
<gene>
    <name type="primary">rps4</name>
</gene>
<accession>P69635</accession>
<accession>P36449</accession>
<accession>P36450</accession>
<comment type="function">
    <text evidence="1">One of the primary rRNA binding proteins, it binds directly to 16S rRNA where it nucleates assembly of the body of the 30S subunit.</text>
</comment>
<comment type="function">
    <text evidence="1">With S5 and S12 plays an important role in translational accuracy.</text>
</comment>
<comment type="subunit">
    <text evidence="1">Part of the 30S ribosomal subunit. Contacts protein S5. The interaction surface between S4 and S5 is involved in control of translational fidelity (By similarity).</text>
</comment>
<comment type="subcellular location">
    <subcellularLocation>
        <location>Plastid</location>
        <location>Chloroplast</location>
    </subcellularLocation>
</comment>
<comment type="similarity">
    <text evidence="3">Belongs to the universal ribosomal protein uS4 family.</text>
</comment>